<sequence>MTHIPKTPADTETLLSEVQGWKHRHVLDLDNFSREELDMVMQTAGVMLDILSRPVKKVPALKGKTIATLFYEPSTRTRSSFELAAKSLSADVLNLNVSQSSISKGESLLDTLDTLESLGADMVVMRHPLSGAPYLAANNCHANIINAGDGWHAHPSQALLDIFTILRHKSSLEGLKITLIGDIKHSRVAHSNIWGLSKMGAKITLCAPYTLLPEGLNTNSKIFPEVTLETDIKQAVSGADVVMGLRLQRERQQSGLLPGIREYARYFQLNEEILKLAKPNSLVMHPGPVNEDIELSQSVVHGEQSVINEQVKNGVAVRMALFYLCSGSKEI</sequence>
<comment type="function">
    <text evidence="1">Catalyzes the condensation of carbamoyl phosphate and aspartate to form carbamoyl aspartate and inorganic phosphate, the committed step in the de novo pyrimidine nucleotide biosynthesis pathway.</text>
</comment>
<comment type="catalytic activity">
    <reaction evidence="1">
        <text>carbamoyl phosphate + L-aspartate = N-carbamoyl-L-aspartate + phosphate + H(+)</text>
        <dbReference type="Rhea" id="RHEA:20013"/>
        <dbReference type="ChEBI" id="CHEBI:15378"/>
        <dbReference type="ChEBI" id="CHEBI:29991"/>
        <dbReference type="ChEBI" id="CHEBI:32814"/>
        <dbReference type="ChEBI" id="CHEBI:43474"/>
        <dbReference type="ChEBI" id="CHEBI:58228"/>
        <dbReference type="EC" id="2.1.3.2"/>
    </reaction>
</comment>
<comment type="pathway">
    <text evidence="1">Pyrimidine metabolism; UMP biosynthesis via de novo pathway; (S)-dihydroorotate from bicarbonate: step 2/3.</text>
</comment>
<comment type="subunit">
    <text evidence="1">Heterododecamer (2C3:3R2) of six catalytic PyrB chains organized as two trimers (C3), and six regulatory PyrI chains organized as three dimers (R2).</text>
</comment>
<comment type="similarity">
    <text evidence="1">Belongs to the aspartate/ornithine carbamoyltransferase superfamily. ATCase family.</text>
</comment>
<reference key="1">
    <citation type="journal article" date="2005" name="Nat. Biotechnol.">
        <title>Genome sequence of the chlorinated compound-respiring bacterium Dehalococcoides species strain CBDB1.</title>
        <authorList>
            <person name="Kube M."/>
            <person name="Beck A."/>
            <person name="Zinder S.H."/>
            <person name="Kuhl H."/>
            <person name="Reinhardt R."/>
            <person name="Adrian L."/>
        </authorList>
    </citation>
    <scope>NUCLEOTIDE SEQUENCE [LARGE SCALE GENOMIC DNA]</scope>
    <source>
        <strain>CBDB1</strain>
    </source>
</reference>
<gene>
    <name evidence="1" type="primary">pyrB</name>
    <name type="ordered locus">cbdbA1113</name>
</gene>
<name>PYRB_DEHMC</name>
<dbReference type="EC" id="2.1.3.2" evidence="1"/>
<dbReference type="EMBL" id="AJ965256">
    <property type="protein sequence ID" value="CAI83211.1"/>
    <property type="molecule type" value="Genomic_DNA"/>
</dbReference>
<dbReference type="RefSeq" id="WP_011309562.1">
    <property type="nucleotide sequence ID" value="NC_007356.1"/>
</dbReference>
<dbReference type="SMR" id="Q3ZY97"/>
<dbReference type="KEGG" id="deh:cbdbA1113"/>
<dbReference type="HOGENOM" id="CLU_043846_2_0_0"/>
<dbReference type="UniPathway" id="UPA00070">
    <property type="reaction ID" value="UER00116"/>
</dbReference>
<dbReference type="Proteomes" id="UP000000433">
    <property type="component" value="Chromosome"/>
</dbReference>
<dbReference type="GO" id="GO:0005829">
    <property type="term" value="C:cytosol"/>
    <property type="evidence" value="ECO:0007669"/>
    <property type="project" value="TreeGrafter"/>
</dbReference>
<dbReference type="GO" id="GO:0016597">
    <property type="term" value="F:amino acid binding"/>
    <property type="evidence" value="ECO:0007669"/>
    <property type="project" value="InterPro"/>
</dbReference>
<dbReference type="GO" id="GO:0004070">
    <property type="term" value="F:aspartate carbamoyltransferase activity"/>
    <property type="evidence" value="ECO:0007669"/>
    <property type="project" value="UniProtKB-UniRule"/>
</dbReference>
<dbReference type="GO" id="GO:0006207">
    <property type="term" value="P:'de novo' pyrimidine nucleobase biosynthetic process"/>
    <property type="evidence" value="ECO:0007669"/>
    <property type="project" value="InterPro"/>
</dbReference>
<dbReference type="GO" id="GO:0044205">
    <property type="term" value="P:'de novo' UMP biosynthetic process"/>
    <property type="evidence" value="ECO:0007669"/>
    <property type="project" value="UniProtKB-UniRule"/>
</dbReference>
<dbReference type="GO" id="GO:0006520">
    <property type="term" value="P:amino acid metabolic process"/>
    <property type="evidence" value="ECO:0007669"/>
    <property type="project" value="InterPro"/>
</dbReference>
<dbReference type="Gene3D" id="3.40.50.1370">
    <property type="entry name" value="Aspartate/ornithine carbamoyltransferase"/>
    <property type="match status" value="2"/>
</dbReference>
<dbReference type="HAMAP" id="MF_00001">
    <property type="entry name" value="Asp_carb_tr"/>
    <property type="match status" value="1"/>
</dbReference>
<dbReference type="InterPro" id="IPR006132">
    <property type="entry name" value="Asp/Orn_carbamoyltranf_P-bd"/>
</dbReference>
<dbReference type="InterPro" id="IPR006130">
    <property type="entry name" value="Asp/Orn_carbamoylTrfase"/>
</dbReference>
<dbReference type="InterPro" id="IPR036901">
    <property type="entry name" value="Asp/Orn_carbamoylTrfase_sf"/>
</dbReference>
<dbReference type="InterPro" id="IPR002082">
    <property type="entry name" value="Asp_carbamoyltransf"/>
</dbReference>
<dbReference type="InterPro" id="IPR006131">
    <property type="entry name" value="Asp_carbamoyltransf_Asp/Orn-bd"/>
</dbReference>
<dbReference type="NCBIfam" id="TIGR00670">
    <property type="entry name" value="asp_carb_tr"/>
    <property type="match status" value="1"/>
</dbReference>
<dbReference type="NCBIfam" id="NF002032">
    <property type="entry name" value="PRK00856.1"/>
    <property type="match status" value="1"/>
</dbReference>
<dbReference type="PANTHER" id="PTHR45753:SF6">
    <property type="entry name" value="ASPARTATE CARBAMOYLTRANSFERASE"/>
    <property type="match status" value="1"/>
</dbReference>
<dbReference type="PANTHER" id="PTHR45753">
    <property type="entry name" value="ORNITHINE CARBAMOYLTRANSFERASE, MITOCHONDRIAL"/>
    <property type="match status" value="1"/>
</dbReference>
<dbReference type="Pfam" id="PF00185">
    <property type="entry name" value="OTCace"/>
    <property type="match status" value="1"/>
</dbReference>
<dbReference type="Pfam" id="PF02729">
    <property type="entry name" value="OTCace_N"/>
    <property type="match status" value="1"/>
</dbReference>
<dbReference type="PRINTS" id="PR00100">
    <property type="entry name" value="AOTCASE"/>
</dbReference>
<dbReference type="PRINTS" id="PR00101">
    <property type="entry name" value="ATCASE"/>
</dbReference>
<dbReference type="SUPFAM" id="SSF53671">
    <property type="entry name" value="Aspartate/ornithine carbamoyltransferase"/>
    <property type="match status" value="1"/>
</dbReference>
<dbReference type="PROSITE" id="PS00097">
    <property type="entry name" value="CARBAMOYLTRANSFERASE"/>
    <property type="match status" value="1"/>
</dbReference>
<accession>Q3ZY97</accession>
<protein>
    <recommendedName>
        <fullName evidence="1">Aspartate carbamoyltransferase catalytic subunit</fullName>
        <ecNumber evidence="1">2.1.3.2</ecNumber>
    </recommendedName>
    <alternativeName>
        <fullName evidence="1">Aspartate transcarbamylase</fullName>
        <shortName evidence="1">ATCase</shortName>
    </alternativeName>
</protein>
<proteinExistence type="inferred from homology"/>
<feature type="chain" id="PRO_0000321096" description="Aspartate carbamoyltransferase catalytic subunit">
    <location>
        <begin position="1"/>
        <end position="331"/>
    </location>
</feature>
<feature type="binding site" evidence="1">
    <location>
        <position position="76"/>
    </location>
    <ligand>
        <name>carbamoyl phosphate</name>
        <dbReference type="ChEBI" id="CHEBI:58228"/>
    </ligand>
</feature>
<feature type="binding site" evidence="1">
    <location>
        <position position="77"/>
    </location>
    <ligand>
        <name>carbamoyl phosphate</name>
        <dbReference type="ChEBI" id="CHEBI:58228"/>
    </ligand>
</feature>
<feature type="binding site" evidence="1">
    <location>
        <position position="104"/>
    </location>
    <ligand>
        <name>L-aspartate</name>
        <dbReference type="ChEBI" id="CHEBI:29991"/>
    </ligand>
</feature>
<feature type="binding site" evidence="1">
    <location>
        <position position="126"/>
    </location>
    <ligand>
        <name>carbamoyl phosphate</name>
        <dbReference type="ChEBI" id="CHEBI:58228"/>
    </ligand>
</feature>
<feature type="binding site" evidence="1">
    <location>
        <position position="154"/>
    </location>
    <ligand>
        <name>carbamoyl phosphate</name>
        <dbReference type="ChEBI" id="CHEBI:58228"/>
    </ligand>
</feature>
<feature type="binding site" evidence="1">
    <location>
        <position position="157"/>
    </location>
    <ligand>
        <name>carbamoyl phosphate</name>
        <dbReference type="ChEBI" id="CHEBI:58228"/>
    </ligand>
</feature>
<feature type="binding site" evidence="1">
    <location>
        <position position="187"/>
    </location>
    <ligand>
        <name>L-aspartate</name>
        <dbReference type="ChEBI" id="CHEBI:29991"/>
    </ligand>
</feature>
<feature type="binding site" evidence="1">
    <location>
        <position position="246"/>
    </location>
    <ligand>
        <name>L-aspartate</name>
        <dbReference type="ChEBI" id="CHEBI:29991"/>
    </ligand>
</feature>
<feature type="binding site" evidence="1">
    <location>
        <position position="287"/>
    </location>
    <ligand>
        <name>carbamoyl phosphate</name>
        <dbReference type="ChEBI" id="CHEBI:58228"/>
    </ligand>
</feature>
<feature type="binding site" evidence="1">
    <location>
        <position position="288"/>
    </location>
    <ligand>
        <name>carbamoyl phosphate</name>
        <dbReference type="ChEBI" id="CHEBI:58228"/>
    </ligand>
</feature>
<organism>
    <name type="scientific">Dehalococcoides mccartyi (strain CBDB1)</name>
    <dbReference type="NCBI Taxonomy" id="255470"/>
    <lineage>
        <taxon>Bacteria</taxon>
        <taxon>Bacillati</taxon>
        <taxon>Chloroflexota</taxon>
        <taxon>Dehalococcoidia</taxon>
        <taxon>Dehalococcoidales</taxon>
        <taxon>Dehalococcoidaceae</taxon>
        <taxon>Dehalococcoides</taxon>
    </lineage>
</organism>
<keyword id="KW-0665">Pyrimidine biosynthesis</keyword>
<keyword id="KW-0808">Transferase</keyword>
<evidence type="ECO:0000255" key="1">
    <source>
        <dbReference type="HAMAP-Rule" id="MF_00001"/>
    </source>
</evidence>